<organism>
    <name type="scientific">Burkholderia multivorans (strain ATCC 17616 / 249)</name>
    <dbReference type="NCBI Taxonomy" id="395019"/>
    <lineage>
        <taxon>Bacteria</taxon>
        <taxon>Pseudomonadati</taxon>
        <taxon>Pseudomonadota</taxon>
        <taxon>Betaproteobacteria</taxon>
        <taxon>Burkholderiales</taxon>
        <taxon>Burkholderiaceae</taxon>
        <taxon>Burkholderia</taxon>
        <taxon>Burkholderia cepacia complex</taxon>
    </lineage>
</organism>
<protein>
    <recommendedName>
        <fullName evidence="1">Flagellar hook-basal body complex protein FliE</fullName>
    </recommendedName>
</protein>
<dbReference type="EMBL" id="CP000868">
    <property type="protein sequence ID" value="ABX16744.1"/>
    <property type="molecule type" value="Genomic_DNA"/>
</dbReference>
<dbReference type="EMBL" id="AP009385">
    <property type="protein sequence ID" value="BAG42149.1"/>
    <property type="molecule type" value="Genomic_DNA"/>
</dbReference>
<dbReference type="RefSeq" id="WP_012214333.1">
    <property type="nucleotide sequence ID" value="NC_010804.1"/>
</dbReference>
<dbReference type="SMR" id="A9ABS7"/>
<dbReference type="STRING" id="395019.BMULJ_00172"/>
<dbReference type="GeneID" id="89571598"/>
<dbReference type="KEGG" id="bmj:BMULJ_00172"/>
<dbReference type="KEGG" id="bmu:Bmul_3060"/>
<dbReference type="eggNOG" id="COG1677">
    <property type="taxonomic scope" value="Bacteria"/>
</dbReference>
<dbReference type="HOGENOM" id="CLU_147249_0_2_4"/>
<dbReference type="Proteomes" id="UP000008815">
    <property type="component" value="Chromosome 1"/>
</dbReference>
<dbReference type="GO" id="GO:0009425">
    <property type="term" value="C:bacterial-type flagellum basal body"/>
    <property type="evidence" value="ECO:0007669"/>
    <property type="project" value="UniProtKB-SubCell"/>
</dbReference>
<dbReference type="GO" id="GO:0003774">
    <property type="term" value="F:cytoskeletal motor activity"/>
    <property type="evidence" value="ECO:0007669"/>
    <property type="project" value="InterPro"/>
</dbReference>
<dbReference type="GO" id="GO:0005198">
    <property type="term" value="F:structural molecule activity"/>
    <property type="evidence" value="ECO:0007669"/>
    <property type="project" value="InterPro"/>
</dbReference>
<dbReference type="GO" id="GO:0071973">
    <property type="term" value="P:bacterial-type flagellum-dependent cell motility"/>
    <property type="evidence" value="ECO:0007669"/>
    <property type="project" value="InterPro"/>
</dbReference>
<dbReference type="HAMAP" id="MF_00724">
    <property type="entry name" value="FliE"/>
    <property type="match status" value="1"/>
</dbReference>
<dbReference type="InterPro" id="IPR001624">
    <property type="entry name" value="FliE"/>
</dbReference>
<dbReference type="NCBIfam" id="TIGR00205">
    <property type="entry name" value="fliE"/>
    <property type="match status" value="1"/>
</dbReference>
<dbReference type="PANTHER" id="PTHR34653">
    <property type="match status" value="1"/>
</dbReference>
<dbReference type="PANTHER" id="PTHR34653:SF1">
    <property type="entry name" value="FLAGELLAR HOOK-BASAL BODY COMPLEX PROTEIN FLIE"/>
    <property type="match status" value="1"/>
</dbReference>
<dbReference type="Pfam" id="PF02049">
    <property type="entry name" value="FliE"/>
    <property type="match status" value="1"/>
</dbReference>
<dbReference type="PRINTS" id="PR01006">
    <property type="entry name" value="FLGHOOKFLIE"/>
</dbReference>
<evidence type="ECO:0000255" key="1">
    <source>
        <dbReference type="HAMAP-Rule" id="MF_00724"/>
    </source>
</evidence>
<accession>A9ABS7</accession>
<proteinExistence type="inferred from homology"/>
<feature type="chain" id="PRO_1000132651" description="Flagellar hook-basal body complex protein FliE">
    <location>
        <begin position="1"/>
        <end position="114"/>
    </location>
</feature>
<comment type="subcellular location">
    <subcellularLocation>
        <location evidence="1">Bacterial flagellum basal body</location>
    </subcellularLocation>
</comment>
<comment type="similarity">
    <text evidence="1">Belongs to the FliE family.</text>
</comment>
<gene>
    <name evidence="1" type="primary">fliE</name>
    <name type="ordered locus">Bmul_3060</name>
    <name type="ordered locus">BMULJ_00172</name>
</gene>
<keyword id="KW-0975">Bacterial flagellum</keyword>
<keyword id="KW-1185">Reference proteome</keyword>
<sequence length="114" mass="11486">MTANVSGIGSVLQQMQAMAAQASGGVASPAAALAGSGAATAGTFASAMKASLDKISGDQQRALGEAQAFEVGAANVSLNDVMVDMQKANIGFQFGLQVRNKLVSAYNDIMQMSV</sequence>
<name>FLIE_BURM1</name>
<reference key="1">
    <citation type="submission" date="2007-10" db="EMBL/GenBank/DDBJ databases">
        <title>Complete sequence of chromosome 1 of Burkholderia multivorans ATCC 17616.</title>
        <authorList>
            <person name="Copeland A."/>
            <person name="Lucas S."/>
            <person name="Lapidus A."/>
            <person name="Barry K."/>
            <person name="Glavina del Rio T."/>
            <person name="Dalin E."/>
            <person name="Tice H."/>
            <person name="Pitluck S."/>
            <person name="Chain P."/>
            <person name="Malfatti S."/>
            <person name="Shin M."/>
            <person name="Vergez L."/>
            <person name="Schmutz J."/>
            <person name="Larimer F."/>
            <person name="Land M."/>
            <person name="Hauser L."/>
            <person name="Kyrpides N."/>
            <person name="Kim E."/>
            <person name="Tiedje J."/>
            <person name="Richardson P."/>
        </authorList>
    </citation>
    <scope>NUCLEOTIDE SEQUENCE [LARGE SCALE GENOMIC DNA]</scope>
    <source>
        <strain>ATCC 17616 / 249</strain>
    </source>
</reference>
<reference key="2">
    <citation type="submission" date="2007-04" db="EMBL/GenBank/DDBJ databases">
        <title>Complete genome sequence of Burkholderia multivorans ATCC 17616.</title>
        <authorList>
            <person name="Ohtsubo Y."/>
            <person name="Yamashita A."/>
            <person name="Kurokawa K."/>
            <person name="Takami H."/>
            <person name="Yuhara S."/>
            <person name="Nishiyama E."/>
            <person name="Endo R."/>
            <person name="Miyazaki R."/>
            <person name="Ono A."/>
            <person name="Yano K."/>
            <person name="Ito M."/>
            <person name="Sota M."/>
            <person name="Yuji N."/>
            <person name="Hattori M."/>
            <person name="Tsuda M."/>
        </authorList>
    </citation>
    <scope>NUCLEOTIDE SEQUENCE [LARGE SCALE GENOMIC DNA]</scope>
    <source>
        <strain>ATCC 17616 / 249</strain>
    </source>
</reference>